<sequence>MEAAQGRLGPEPELSVGAEHQAATFSGRPSRTPSKPPSVRTLSGEEEAESVGVSSRHPRASPKTWSGSIAHGPELDTWEDKPSSRATPSGARGRRGVPGSEHAPPPSSWYPEPEPSEDQPSALRVCRRGSPGGVEMNVELPQQEGDDDDDEDEEAAAGRAGRSFPSRLQDSRSLDGLSGACGGGGSSSSGETGAGGGRRATISSPLELEGTVSRHGDLTHFVANNLQLKIRLSGAPPPVPPASVRPCLTPAPTPTIPPIDPDVLRDLERLSRELGGRVDRLLRGLGGAVQELTALSVGCIQTYRDAVDSLGEAVDMSIKGMYTLLARCEELERALQPVQGLARQVRDIRRTLEVLEALCK</sequence>
<keyword id="KW-0458">Lysosome</keyword>
<keyword id="KW-0472">Membrane</keyword>
<keyword id="KW-0597">Phosphoprotein</keyword>
<keyword id="KW-1185">Reference proteome</keyword>
<dbReference type="EMBL" id="AK169875">
    <property type="protein sequence ID" value="BAE41427.1"/>
    <property type="molecule type" value="mRNA"/>
</dbReference>
<dbReference type="EMBL" id="AK009886">
    <property type="protein sequence ID" value="BAB26563.1"/>
    <property type="molecule type" value="mRNA"/>
</dbReference>
<dbReference type="EMBL" id="AK151629">
    <property type="protein sequence ID" value="BAE30563.1"/>
    <property type="molecule type" value="mRNA"/>
</dbReference>
<dbReference type="EMBL" id="AL645902">
    <property type="status" value="NOT_ANNOTATED_CDS"/>
    <property type="molecule type" value="Genomic_DNA"/>
</dbReference>
<dbReference type="CCDS" id="CCDS36190.1"/>
<dbReference type="RefSeq" id="NP_082281.2">
    <property type="nucleotide sequence ID" value="NM_028005.3"/>
</dbReference>
<dbReference type="SMR" id="Q9D6W8"/>
<dbReference type="ComplexPortal" id="CPX-5061">
    <property type="entry name" value="BORC complex"/>
</dbReference>
<dbReference type="FunCoup" id="Q9D6W8">
    <property type="interactions" value="20"/>
</dbReference>
<dbReference type="IntAct" id="Q9D6W8">
    <property type="interactions" value="2"/>
</dbReference>
<dbReference type="MINT" id="Q9D6W8"/>
<dbReference type="STRING" id="10090.ENSMUSP00000059143"/>
<dbReference type="GlyGen" id="Q9D6W8">
    <property type="glycosylation" value="2 sites"/>
</dbReference>
<dbReference type="iPTMnet" id="Q9D6W8"/>
<dbReference type="PhosphoSitePlus" id="Q9D6W8"/>
<dbReference type="SwissPalm" id="Q9D6W8"/>
<dbReference type="jPOST" id="Q9D6W8"/>
<dbReference type="PaxDb" id="10090-ENSMUSP00000059143"/>
<dbReference type="PeptideAtlas" id="Q9D6W8"/>
<dbReference type="ProteomicsDB" id="273696"/>
<dbReference type="Pumba" id="Q9D6W8"/>
<dbReference type="Antibodypedia" id="47971">
    <property type="antibodies" value="106 antibodies from 16 providers"/>
</dbReference>
<dbReference type="Ensembl" id="ENSMUST00000051888.4">
    <property type="protein sequence ID" value="ENSMUSP00000059143.3"/>
    <property type="gene ID" value="ENSMUSG00000045176.4"/>
</dbReference>
<dbReference type="GeneID" id="71923"/>
<dbReference type="KEGG" id="mmu:71923"/>
<dbReference type="UCSC" id="uc007jpb.1">
    <property type="organism name" value="mouse"/>
</dbReference>
<dbReference type="AGR" id="MGI:1919173"/>
<dbReference type="CTD" id="54785"/>
<dbReference type="MGI" id="MGI:1919173">
    <property type="gene designation" value="Borcs6"/>
</dbReference>
<dbReference type="VEuPathDB" id="HostDB:ENSMUSG00000045176"/>
<dbReference type="eggNOG" id="KOG4514">
    <property type="taxonomic scope" value="Eukaryota"/>
</dbReference>
<dbReference type="GeneTree" id="ENSGT00490000043453"/>
<dbReference type="HOGENOM" id="CLU_782948_0_0_1"/>
<dbReference type="InParanoid" id="Q9D6W8"/>
<dbReference type="OMA" id="PPEWEAP"/>
<dbReference type="OrthoDB" id="21270at2759"/>
<dbReference type="PhylomeDB" id="Q9D6W8"/>
<dbReference type="BioGRID-ORCS" id="71923">
    <property type="hits" value="1 hit in 44 CRISPR screens"/>
</dbReference>
<dbReference type="ChiTaRS" id="Borcs6">
    <property type="organism name" value="mouse"/>
</dbReference>
<dbReference type="PRO" id="PR:Q9D6W8"/>
<dbReference type="Proteomes" id="UP000000589">
    <property type="component" value="Chromosome 11"/>
</dbReference>
<dbReference type="RNAct" id="Q9D6W8">
    <property type="molecule type" value="protein"/>
</dbReference>
<dbReference type="Bgee" id="ENSMUSG00000045176">
    <property type="expression patterns" value="Expressed in granulocyte and 213 other cell types or tissues"/>
</dbReference>
<dbReference type="GO" id="GO:0099078">
    <property type="term" value="C:BORC complex"/>
    <property type="evidence" value="ECO:0000250"/>
    <property type="project" value="UniProtKB"/>
</dbReference>
<dbReference type="GO" id="GO:0098574">
    <property type="term" value="C:cytoplasmic side of lysosomal membrane"/>
    <property type="evidence" value="ECO:0000303"/>
    <property type="project" value="ComplexPortal"/>
</dbReference>
<dbReference type="GO" id="GO:0042802">
    <property type="term" value="F:identical protein binding"/>
    <property type="evidence" value="ECO:0007669"/>
    <property type="project" value="Ensembl"/>
</dbReference>
<dbReference type="GO" id="GO:0032418">
    <property type="term" value="P:lysosome localization"/>
    <property type="evidence" value="ECO:0000250"/>
    <property type="project" value="UniProtKB"/>
</dbReference>
<dbReference type="GO" id="GO:0072384">
    <property type="term" value="P:organelle transport along microtubule"/>
    <property type="evidence" value="ECO:0000303"/>
    <property type="project" value="ComplexPortal"/>
</dbReference>
<dbReference type="GO" id="GO:0051036">
    <property type="term" value="P:regulation of endosome size"/>
    <property type="evidence" value="ECO:0000303"/>
    <property type="project" value="ComplexPortal"/>
</dbReference>
<dbReference type="GO" id="GO:0062196">
    <property type="term" value="P:regulation of lysosome size"/>
    <property type="evidence" value="ECO:0000303"/>
    <property type="project" value="ComplexPortal"/>
</dbReference>
<dbReference type="InterPro" id="IPR019314">
    <property type="entry name" value="BORCS6"/>
</dbReference>
<dbReference type="InterPro" id="IPR046465">
    <property type="entry name" value="BORCS6_C"/>
</dbReference>
<dbReference type="PANTHER" id="PTHR13440">
    <property type="entry name" value="BLOC-1 RELATED COMPLEX SUBUNIT 6"/>
    <property type="match status" value="1"/>
</dbReference>
<dbReference type="PANTHER" id="PTHR13440:SF8">
    <property type="entry name" value="BLOC-1-RELATED COMPLEX SUBUNIT 6"/>
    <property type="match status" value="1"/>
</dbReference>
<dbReference type="Pfam" id="PF10157">
    <property type="entry name" value="BORCS6"/>
    <property type="match status" value="1"/>
</dbReference>
<feature type="chain" id="PRO_0000393961" description="BLOC-1-related complex subunit 6">
    <location>
        <begin position="1"/>
        <end position="360"/>
    </location>
</feature>
<feature type="region of interest" description="Disordered" evidence="2">
    <location>
        <begin position="1"/>
        <end position="201"/>
    </location>
</feature>
<feature type="compositionally biased region" description="Polar residues" evidence="2">
    <location>
        <begin position="23"/>
        <end position="33"/>
    </location>
</feature>
<feature type="compositionally biased region" description="Acidic residues" evidence="2">
    <location>
        <begin position="144"/>
        <end position="155"/>
    </location>
</feature>
<feature type="compositionally biased region" description="Gly residues" evidence="2">
    <location>
        <begin position="179"/>
        <end position="198"/>
    </location>
</feature>
<feature type="modified residue" description="Phosphothreonine" evidence="7">
    <location>
        <position position="41"/>
    </location>
</feature>
<feature type="modified residue" description="Phosphoserine" evidence="5 6 7">
    <location>
        <position position="130"/>
    </location>
</feature>
<feature type="modified residue" description="Phosphoserine" evidence="7">
    <location>
        <position position="173"/>
    </location>
</feature>
<feature type="modified residue" description="Phosphothreonine" evidence="7">
    <location>
        <position position="201"/>
    </location>
</feature>
<feature type="modified residue" description="Phosphoserine" evidence="1">
    <location>
        <position position="204"/>
    </location>
</feature>
<feature type="sequence conflict" description="In Ref. 1; BAE41427." evidence="3" ref="1">
    <original>L</original>
    <variation>V</variation>
    <location>
        <position position="285"/>
    </location>
</feature>
<feature type="sequence conflict" description="In Ref. 1; BAE41427." evidence="3" ref="1">
    <original>I</original>
    <variation>T</variation>
    <location>
        <position position="300"/>
    </location>
</feature>
<name>BORC6_MOUSE</name>
<accession>Q9D6W8</accession>
<accession>Q3TE21</accession>
<evidence type="ECO:0000250" key="1">
    <source>
        <dbReference type="UniProtKB" id="Q96GS4"/>
    </source>
</evidence>
<evidence type="ECO:0000256" key="2">
    <source>
        <dbReference type="SAM" id="MobiDB-lite"/>
    </source>
</evidence>
<evidence type="ECO:0000305" key="3"/>
<evidence type="ECO:0000312" key="4">
    <source>
        <dbReference type="MGI" id="MGI:1919173"/>
    </source>
</evidence>
<evidence type="ECO:0007744" key="5">
    <source>
    </source>
</evidence>
<evidence type="ECO:0007744" key="6">
    <source>
    </source>
</evidence>
<evidence type="ECO:0007744" key="7">
    <source>
    </source>
</evidence>
<organism>
    <name type="scientific">Mus musculus</name>
    <name type="common">Mouse</name>
    <dbReference type="NCBI Taxonomy" id="10090"/>
    <lineage>
        <taxon>Eukaryota</taxon>
        <taxon>Metazoa</taxon>
        <taxon>Chordata</taxon>
        <taxon>Craniata</taxon>
        <taxon>Vertebrata</taxon>
        <taxon>Euteleostomi</taxon>
        <taxon>Mammalia</taxon>
        <taxon>Eutheria</taxon>
        <taxon>Euarchontoglires</taxon>
        <taxon>Glires</taxon>
        <taxon>Rodentia</taxon>
        <taxon>Myomorpha</taxon>
        <taxon>Muroidea</taxon>
        <taxon>Muridae</taxon>
        <taxon>Murinae</taxon>
        <taxon>Mus</taxon>
        <taxon>Mus</taxon>
    </lineage>
</organism>
<reference key="1">
    <citation type="journal article" date="2005" name="Science">
        <title>The transcriptional landscape of the mammalian genome.</title>
        <authorList>
            <person name="Carninci P."/>
            <person name="Kasukawa T."/>
            <person name="Katayama S."/>
            <person name="Gough J."/>
            <person name="Frith M.C."/>
            <person name="Maeda N."/>
            <person name="Oyama R."/>
            <person name="Ravasi T."/>
            <person name="Lenhard B."/>
            <person name="Wells C."/>
            <person name="Kodzius R."/>
            <person name="Shimokawa K."/>
            <person name="Bajic V.B."/>
            <person name="Brenner S.E."/>
            <person name="Batalov S."/>
            <person name="Forrest A.R."/>
            <person name="Zavolan M."/>
            <person name="Davis M.J."/>
            <person name="Wilming L.G."/>
            <person name="Aidinis V."/>
            <person name="Allen J.E."/>
            <person name="Ambesi-Impiombato A."/>
            <person name="Apweiler R."/>
            <person name="Aturaliya R.N."/>
            <person name="Bailey T.L."/>
            <person name="Bansal M."/>
            <person name="Baxter L."/>
            <person name="Beisel K.W."/>
            <person name="Bersano T."/>
            <person name="Bono H."/>
            <person name="Chalk A.M."/>
            <person name="Chiu K.P."/>
            <person name="Choudhary V."/>
            <person name="Christoffels A."/>
            <person name="Clutterbuck D.R."/>
            <person name="Crowe M.L."/>
            <person name="Dalla E."/>
            <person name="Dalrymple B.P."/>
            <person name="de Bono B."/>
            <person name="Della Gatta G."/>
            <person name="di Bernardo D."/>
            <person name="Down T."/>
            <person name="Engstrom P."/>
            <person name="Fagiolini M."/>
            <person name="Faulkner G."/>
            <person name="Fletcher C.F."/>
            <person name="Fukushima T."/>
            <person name="Furuno M."/>
            <person name="Futaki S."/>
            <person name="Gariboldi M."/>
            <person name="Georgii-Hemming P."/>
            <person name="Gingeras T.R."/>
            <person name="Gojobori T."/>
            <person name="Green R.E."/>
            <person name="Gustincich S."/>
            <person name="Harbers M."/>
            <person name="Hayashi Y."/>
            <person name="Hensch T.K."/>
            <person name="Hirokawa N."/>
            <person name="Hill D."/>
            <person name="Huminiecki L."/>
            <person name="Iacono M."/>
            <person name="Ikeo K."/>
            <person name="Iwama A."/>
            <person name="Ishikawa T."/>
            <person name="Jakt M."/>
            <person name="Kanapin A."/>
            <person name="Katoh M."/>
            <person name="Kawasawa Y."/>
            <person name="Kelso J."/>
            <person name="Kitamura H."/>
            <person name="Kitano H."/>
            <person name="Kollias G."/>
            <person name="Krishnan S.P."/>
            <person name="Kruger A."/>
            <person name="Kummerfeld S.K."/>
            <person name="Kurochkin I.V."/>
            <person name="Lareau L.F."/>
            <person name="Lazarevic D."/>
            <person name="Lipovich L."/>
            <person name="Liu J."/>
            <person name="Liuni S."/>
            <person name="McWilliam S."/>
            <person name="Madan Babu M."/>
            <person name="Madera M."/>
            <person name="Marchionni L."/>
            <person name="Matsuda H."/>
            <person name="Matsuzawa S."/>
            <person name="Miki H."/>
            <person name="Mignone F."/>
            <person name="Miyake S."/>
            <person name="Morris K."/>
            <person name="Mottagui-Tabar S."/>
            <person name="Mulder N."/>
            <person name="Nakano N."/>
            <person name="Nakauchi H."/>
            <person name="Ng P."/>
            <person name="Nilsson R."/>
            <person name="Nishiguchi S."/>
            <person name="Nishikawa S."/>
            <person name="Nori F."/>
            <person name="Ohara O."/>
            <person name="Okazaki Y."/>
            <person name="Orlando V."/>
            <person name="Pang K.C."/>
            <person name="Pavan W.J."/>
            <person name="Pavesi G."/>
            <person name="Pesole G."/>
            <person name="Petrovsky N."/>
            <person name="Piazza S."/>
            <person name="Reed J."/>
            <person name="Reid J.F."/>
            <person name="Ring B.Z."/>
            <person name="Ringwald M."/>
            <person name="Rost B."/>
            <person name="Ruan Y."/>
            <person name="Salzberg S.L."/>
            <person name="Sandelin A."/>
            <person name="Schneider C."/>
            <person name="Schoenbach C."/>
            <person name="Sekiguchi K."/>
            <person name="Semple C.A."/>
            <person name="Seno S."/>
            <person name="Sessa L."/>
            <person name="Sheng Y."/>
            <person name="Shibata Y."/>
            <person name="Shimada H."/>
            <person name="Shimada K."/>
            <person name="Silva D."/>
            <person name="Sinclair B."/>
            <person name="Sperling S."/>
            <person name="Stupka E."/>
            <person name="Sugiura K."/>
            <person name="Sultana R."/>
            <person name="Takenaka Y."/>
            <person name="Taki K."/>
            <person name="Tammoja K."/>
            <person name="Tan S.L."/>
            <person name="Tang S."/>
            <person name="Taylor M.S."/>
            <person name="Tegner J."/>
            <person name="Teichmann S.A."/>
            <person name="Ueda H.R."/>
            <person name="van Nimwegen E."/>
            <person name="Verardo R."/>
            <person name="Wei C.L."/>
            <person name="Yagi K."/>
            <person name="Yamanishi H."/>
            <person name="Zabarovsky E."/>
            <person name="Zhu S."/>
            <person name="Zimmer A."/>
            <person name="Hide W."/>
            <person name="Bult C."/>
            <person name="Grimmond S.M."/>
            <person name="Teasdale R.D."/>
            <person name="Liu E.T."/>
            <person name="Brusic V."/>
            <person name="Quackenbush J."/>
            <person name="Wahlestedt C."/>
            <person name="Mattick J.S."/>
            <person name="Hume D.A."/>
            <person name="Kai C."/>
            <person name="Sasaki D."/>
            <person name="Tomaru Y."/>
            <person name="Fukuda S."/>
            <person name="Kanamori-Katayama M."/>
            <person name="Suzuki M."/>
            <person name="Aoki J."/>
            <person name="Arakawa T."/>
            <person name="Iida J."/>
            <person name="Imamura K."/>
            <person name="Itoh M."/>
            <person name="Kato T."/>
            <person name="Kawaji H."/>
            <person name="Kawagashira N."/>
            <person name="Kawashima T."/>
            <person name="Kojima M."/>
            <person name="Kondo S."/>
            <person name="Konno H."/>
            <person name="Nakano K."/>
            <person name="Ninomiya N."/>
            <person name="Nishio T."/>
            <person name="Okada M."/>
            <person name="Plessy C."/>
            <person name="Shibata K."/>
            <person name="Shiraki T."/>
            <person name="Suzuki S."/>
            <person name="Tagami M."/>
            <person name="Waki K."/>
            <person name="Watahiki A."/>
            <person name="Okamura-Oho Y."/>
            <person name="Suzuki H."/>
            <person name="Kawai J."/>
            <person name="Hayashizaki Y."/>
        </authorList>
    </citation>
    <scope>NUCLEOTIDE SEQUENCE [LARGE SCALE MRNA]</scope>
    <source>
        <strain>C57BL/6J</strain>
        <strain>NOD</strain>
        <tissue>Bone marrow</tissue>
        <tissue>Tongue</tissue>
    </source>
</reference>
<reference key="2">
    <citation type="journal article" date="2009" name="PLoS Biol.">
        <title>Lineage-specific biology revealed by a finished genome assembly of the mouse.</title>
        <authorList>
            <person name="Church D.M."/>
            <person name="Goodstadt L."/>
            <person name="Hillier L.W."/>
            <person name="Zody M.C."/>
            <person name="Goldstein S."/>
            <person name="She X."/>
            <person name="Bult C.J."/>
            <person name="Agarwala R."/>
            <person name="Cherry J.L."/>
            <person name="DiCuccio M."/>
            <person name="Hlavina W."/>
            <person name="Kapustin Y."/>
            <person name="Meric P."/>
            <person name="Maglott D."/>
            <person name="Birtle Z."/>
            <person name="Marques A.C."/>
            <person name="Graves T."/>
            <person name="Zhou S."/>
            <person name="Teague B."/>
            <person name="Potamousis K."/>
            <person name="Churas C."/>
            <person name="Place M."/>
            <person name="Herschleb J."/>
            <person name="Runnheim R."/>
            <person name="Forrest D."/>
            <person name="Amos-Landgraf J."/>
            <person name="Schwartz D.C."/>
            <person name="Cheng Z."/>
            <person name="Lindblad-Toh K."/>
            <person name="Eichler E.E."/>
            <person name="Ponting C.P."/>
        </authorList>
    </citation>
    <scope>NUCLEOTIDE SEQUENCE [LARGE SCALE GENOMIC DNA]</scope>
    <source>
        <strain>C57BL/6J</strain>
    </source>
</reference>
<reference key="3">
    <citation type="journal article" date="2007" name="Proc. Natl. Acad. Sci. U.S.A.">
        <title>Large-scale phosphorylation analysis of mouse liver.</title>
        <authorList>
            <person name="Villen J."/>
            <person name="Beausoleil S.A."/>
            <person name="Gerber S.A."/>
            <person name="Gygi S.P."/>
        </authorList>
    </citation>
    <scope>PHOSPHORYLATION [LARGE SCALE ANALYSIS] AT SER-130</scope>
    <scope>IDENTIFICATION BY MASS SPECTROMETRY [LARGE SCALE ANALYSIS]</scope>
    <source>
        <tissue>Liver</tissue>
    </source>
</reference>
<reference key="4">
    <citation type="journal article" date="2009" name="Immunity">
        <title>The phagosomal proteome in interferon-gamma-activated macrophages.</title>
        <authorList>
            <person name="Trost M."/>
            <person name="English L."/>
            <person name="Lemieux S."/>
            <person name="Courcelles M."/>
            <person name="Desjardins M."/>
            <person name="Thibault P."/>
        </authorList>
    </citation>
    <scope>PHOSPHORYLATION [LARGE SCALE ANALYSIS] AT SER-130</scope>
    <scope>IDENTIFICATION BY MASS SPECTROMETRY [LARGE SCALE ANALYSIS]</scope>
</reference>
<reference key="5">
    <citation type="journal article" date="2010" name="Cell">
        <title>A tissue-specific atlas of mouse protein phosphorylation and expression.</title>
        <authorList>
            <person name="Huttlin E.L."/>
            <person name="Jedrychowski M.P."/>
            <person name="Elias J.E."/>
            <person name="Goswami T."/>
            <person name="Rad R."/>
            <person name="Beausoleil S.A."/>
            <person name="Villen J."/>
            <person name="Haas W."/>
            <person name="Sowa M.E."/>
            <person name="Gygi S.P."/>
        </authorList>
    </citation>
    <scope>PHOSPHORYLATION [LARGE SCALE ANALYSIS] AT THR-41; SER-130; SER-173 AND THR-201</scope>
    <scope>IDENTIFICATION BY MASS SPECTROMETRY [LARGE SCALE ANALYSIS]</scope>
    <source>
        <tissue>Brain</tissue>
        <tissue>Brown adipose tissue</tissue>
        <tissue>Heart</tissue>
        <tissue>Kidney</tissue>
        <tissue>Liver</tissue>
        <tissue>Lung</tissue>
        <tissue>Pancreas</tissue>
        <tissue>Spleen</tissue>
        <tissue>Testis</tissue>
    </source>
</reference>
<proteinExistence type="evidence at protein level"/>
<comment type="function">
    <text evidence="1">As part of the BORC complex may play a role in lysosomes movement and localization at the cell periphery. Associated with the cytosolic face of lysosomes, the BORC complex may recruit ARL8B and couple lysosomes to microtubule plus-end-directed kinesin motor.</text>
</comment>
<comment type="subunit">
    <text evidence="1">Component of the BLOC-one-related complex (BORC) which is composed of BLOC1S1, BLOC1S2, BORCS5, BORCS6, BORCS7, BORCS8, KXD1 and SNAPIN.</text>
</comment>
<comment type="subcellular location">
    <subcellularLocation>
        <location evidence="1">Lysosome membrane</location>
    </subcellularLocation>
</comment>
<comment type="similarity">
    <text evidence="3">Belongs to the BORCS6 family.</text>
</comment>
<protein>
    <recommendedName>
        <fullName evidence="3">BLOC-1-related complex subunit 6</fullName>
    </recommendedName>
</protein>
<gene>
    <name evidence="4" type="primary">Borcs6</name>
</gene>